<keyword id="KW-0963">Cytoplasm</keyword>
<keyword id="KW-0312">Gluconeogenesis</keyword>
<keyword id="KW-0324">Glycolysis</keyword>
<keyword id="KW-0413">Isomerase</keyword>
<accession>C0Q4C6</accession>
<reference key="1">
    <citation type="journal article" date="2009" name="PLoS ONE">
        <title>Salmonella paratyphi C: genetic divergence from Salmonella choleraesuis and pathogenic convergence with Salmonella typhi.</title>
        <authorList>
            <person name="Liu W.-Q."/>
            <person name="Feng Y."/>
            <person name="Wang Y."/>
            <person name="Zou Q.-H."/>
            <person name="Chen F."/>
            <person name="Guo J.-T."/>
            <person name="Peng Y.-H."/>
            <person name="Jin Y."/>
            <person name="Li Y.-G."/>
            <person name="Hu S.-N."/>
            <person name="Johnston R.N."/>
            <person name="Liu G.-R."/>
            <person name="Liu S.-L."/>
        </authorList>
    </citation>
    <scope>NUCLEOTIDE SEQUENCE [LARGE SCALE GENOMIC DNA]</scope>
    <source>
        <strain>RKS4594</strain>
    </source>
</reference>
<name>G6PI_SALPC</name>
<dbReference type="EC" id="5.3.1.9" evidence="1"/>
<dbReference type="EMBL" id="CP000857">
    <property type="protein sequence ID" value="ACN48345.1"/>
    <property type="molecule type" value="Genomic_DNA"/>
</dbReference>
<dbReference type="RefSeq" id="WP_000790028.1">
    <property type="nucleotide sequence ID" value="NC_012125.1"/>
</dbReference>
<dbReference type="SMR" id="C0Q4C6"/>
<dbReference type="KEGG" id="sei:SPC_4282"/>
<dbReference type="HOGENOM" id="CLU_017947_3_1_6"/>
<dbReference type="UniPathway" id="UPA00109">
    <property type="reaction ID" value="UER00181"/>
</dbReference>
<dbReference type="UniPathway" id="UPA00138"/>
<dbReference type="Proteomes" id="UP000001599">
    <property type="component" value="Chromosome"/>
</dbReference>
<dbReference type="GO" id="GO:0005829">
    <property type="term" value="C:cytosol"/>
    <property type="evidence" value="ECO:0007669"/>
    <property type="project" value="TreeGrafter"/>
</dbReference>
<dbReference type="GO" id="GO:0097367">
    <property type="term" value="F:carbohydrate derivative binding"/>
    <property type="evidence" value="ECO:0007669"/>
    <property type="project" value="InterPro"/>
</dbReference>
<dbReference type="GO" id="GO:0004347">
    <property type="term" value="F:glucose-6-phosphate isomerase activity"/>
    <property type="evidence" value="ECO:0007669"/>
    <property type="project" value="UniProtKB-UniRule"/>
</dbReference>
<dbReference type="GO" id="GO:0048029">
    <property type="term" value="F:monosaccharide binding"/>
    <property type="evidence" value="ECO:0007669"/>
    <property type="project" value="TreeGrafter"/>
</dbReference>
<dbReference type="GO" id="GO:0006094">
    <property type="term" value="P:gluconeogenesis"/>
    <property type="evidence" value="ECO:0007669"/>
    <property type="project" value="UniProtKB-UniRule"/>
</dbReference>
<dbReference type="GO" id="GO:0051156">
    <property type="term" value="P:glucose 6-phosphate metabolic process"/>
    <property type="evidence" value="ECO:0007669"/>
    <property type="project" value="TreeGrafter"/>
</dbReference>
<dbReference type="GO" id="GO:0006096">
    <property type="term" value="P:glycolytic process"/>
    <property type="evidence" value="ECO:0007669"/>
    <property type="project" value="UniProtKB-UniRule"/>
</dbReference>
<dbReference type="CDD" id="cd05015">
    <property type="entry name" value="SIS_PGI_1"/>
    <property type="match status" value="1"/>
</dbReference>
<dbReference type="CDD" id="cd05016">
    <property type="entry name" value="SIS_PGI_2"/>
    <property type="match status" value="1"/>
</dbReference>
<dbReference type="FunFam" id="1.10.1390.10:FF:000001">
    <property type="entry name" value="Glucose-6-phosphate isomerase"/>
    <property type="match status" value="1"/>
</dbReference>
<dbReference type="FunFam" id="3.40.50.10490:FF:000004">
    <property type="entry name" value="Glucose-6-phosphate isomerase"/>
    <property type="match status" value="1"/>
</dbReference>
<dbReference type="Gene3D" id="1.10.1390.10">
    <property type="match status" value="1"/>
</dbReference>
<dbReference type="Gene3D" id="3.40.50.10490">
    <property type="entry name" value="Glucose-6-phosphate isomerase like protein, domain 1"/>
    <property type="match status" value="2"/>
</dbReference>
<dbReference type="HAMAP" id="MF_00473">
    <property type="entry name" value="G6P_isomerase"/>
    <property type="match status" value="1"/>
</dbReference>
<dbReference type="InterPro" id="IPR001672">
    <property type="entry name" value="G6P_Isomerase"/>
</dbReference>
<dbReference type="InterPro" id="IPR023096">
    <property type="entry name" value="G6P_Isomerase_C"/>
</dbReference>
<dbReference type="InterPro" id="IPR018189">
    <property type="entry name" value="Phosphoglucose_isomerase_CS"/>
</dbReference>
<dbReference type="InterPro" id="IPR046348">
    <property type="entry name" value="SIS_dom_sf"/>
</dbReference>
<dbReference type="InterPro" id="IPR035476">
    <property type="entry name" value="SIS_PGI_1"/>
</dbReference>
<dbReference type="InterPro" id="IPR035482">
    <property type="entry name" value="SIS_PGI_2"/>
</dbReference>
<dbReference type="NCBIfam" id="NF001211">
    <property type="entry name" value="PRK00179.1"/>
    <property type="match status" value="1"/>
</dbReference>
<dbReference type="PANTHER" id="PTHR11469">
    <property type="entry name" value="GLUCOSE-6-PHOSPHATE ISOMERASE"/>
    <property type="match status" value="1"/>
</dbReference>
<dbReference type="PANTHER" id="PTHR11469:SF1">
    <property type="entry name" value="GLUCOSE-6-PHOSPHATE ISOMERASE"/>
    <property type="match status" value="1"/>
</dbReference>
<dbReference type="Pfam" id="PF00342">
    <property type="entry name" value="PGI"/>
    <property type="match status" value="1"/>
</dbReference>
<dbReference type="PRINTS" id="PR00662">
    <property type="entry name" value="G6PISOMERASE"/>
</dbReference>
<dbReference type="SUPFAM" id="SSF53697">
    <property type="entry name" value="SIS domain"/>
    <property type="match status" value="1"/>
</dbReference>
<dbReference type="PROSITE" id="PS00765">
    <property type="entry name" value="P_GLUCOSE_ISOMERASE_1"/>
    <property type="match status" value="1"/>
</dbReference>
<dbReference type="PROSITE" id="PS00174">
    <property type="entry name" value="P_GLUCOSE_ISOMERASE_2"/>
    <property type="match status" value="1"/>
</dbReference>
<dbReference type="PROSITE" id="PS51463">
    <property type="entry name" value="P_GLUCOSE_ISOMERASE_3"/>
    <property type="match status" value="1"/>
</dbReference>
<evidence type="ECO:0000255" key="1">
    <source>
        <dbReference type="HAMAP-Rule" id="MF_00473"/>
    </source>
</evidence>
<organism>
    <name type="scientific">Salmonella paratyphi C (strain RKS4594)</name>
    <dbReference type="NCBI Taxonomy" id="476213"/>
    <lineage>
        <taxon>Bacteria</taxon>
        <taxon>Pseudomonadati</taxon>
        <taxon>Pseudomonadota</taxon>
        <taxon>Gammaproteobacteria</taxon>
        <taxon>Enterobacterales</taxon>
        <taxon>Enterobacteriaceae</taxon>
        <taxon>Salmonella</taxon>
    </lineage>
</organism>
<sequence>MKNINPTQTSAWQALQKHYDEMKDVTIAELFANDSDRFAKFSATFDDLMLVDFSKNRITEETLAKLQDLAKETDLAGAIKSMFSGEKINRTEDRAVLHVALRNRSNTPIIVDGKDVMPEVNAVLEKMKTFSQAIISGQWKGYTGKAITDVVNIGIGGSDLGPFMVTEALRPYKNHLNMHFVSNVDGTHIAEVLKKVNPETTLFLVASKTFTTQETMTNAHSARDWFLKTAGDEKHVAKHFAALSTNAKAVGEFGIDTANMFEFWDWVGGRYSLWSAIGLSIILSVGFDNFVELLSGAHAMDKHFSTTPAEKNLPILLALIGIWYNNFFGAETEAILPYDQYMHRFAAYFQQGNMESNGKYVDRNGNAVDYQTGPIIWGEPGTNGQHAFYQLIHQGTKMVPCDFIAPAITHNPLSDHHQKLLSNFFAQTEALAFGKSREVVEQEYRDQGKDPAQLEHVVPFKVFEGNRPTNSILLREITPFSLGALIALYEHKIFTQGVILNIFTFDQWGVELGKQLANRILPELGDDKAISSHDSSTNGLINRYKAWRA</sequence>
<gene>
    <name evidence="1" type="primary">pgi</name>
    <name type="ordered locus">SPC_4282</name>
</gene>
<feature type="chain" id="PRO_1000135538" description="Glucose-6-phosphate isomerase">
    <location>
        <begin position="1"/>
        <end position="549"/>
    </location>
</feature>
<feature type="active site" description="Proton donor" evidence="1">
    <location>
        <position position="355"/>
    </location>
</feature>
<feature type="active site" evidence="1">
    <location>
        <position position="386"/>
    </location>
</feature>
<feature type="active site" evidence="1">
    <location>
        <position position="514"/>
    </location>
</feature>
<proteinExistence type="inferred from homology"/>
<comment type="function">
    <text evidence="1">Catalyzes the reversible isomerization of glucose-6-phosphate to fructose-6-phosphate.</text>
</comment>
<comment type="catalytic activity">
    <reaction evidence="1">
        <text>alpha-D-glucose 6-phosphate = beta-D-fructose 6-phosphate</text>
        <dbReference type="Rhea" id="RHEA:11816"/>
        <dbReference type="ChEBI" id="CHEBI:57634"/>
        <dbReference type="ChEBI" id="CHEBI:58225"/>
        <dbReference type="EC" id="5.3.1.9"/>
    </reaction>
</comment>
<comment type="pathway">
    <text evidence="1">Carbohydrate biosynthesis; gluconeogenesis.</text>
</comment>
<comment type="pathway">
    <text evidence="1">Carbohydrate degradation; glycolysis; D-glyceraldehyde 3-phosphate and glycerone phosphate from D-glucose: step 2/4.</text>
</comment>
<comment type="subcellular location">
    <subcellularLocation>
        <location evidence="1">Cytoplasm</location>
    </subcellularLocation>
</comment>
<comment type="similarity">
    <text evidence="1">Belongs to the GPI family.</text>
</comment>
<protein>
    <recommendedName>
        <fullName evidence="1">Glucose-6-phosphate isomerase</fullName>
        <shortName evidence="1">GPI</shortName>
        <ecNumber evidence="1">5.3.1.9</ecNumber>
    </recommendedName>
    <alternativeName>
        <fullName evidence="1">Phosphoglucose isomerase</fullName>
        <shortName evidence="1">PGI</shortName>
    </alternativeName>
    <alternativeName>
        <fullName evidence="1">Phosphohexose isomerase</fullName>
        <shortName evidence="1">PHI</shortName>
    </alternativeName>
</protein>